<comment type="similarity">
    <text evidence="1">To M.jannaschii MJ1311.</text>
</comment>
<evidence type="ECO:0000305" key="1"/>
<feature type="chain" id="PRO_0000107437" description="Uncharacterized protein MJ1614">
    <location>
        <begin position="1"/>
        <end position="251"/>
    </location>
</feature>
<dbReference type="EMBL" id="L77117">
    <property type="protein sequence ID" value="AAB99634.1"/>
    <property type="molecule type" value="Genomic_DNA"/>
</dbReference>
<dbReference type="PIR" id="E64501">
    <property type="entry name" value="E64501"/>
</dbReference>
<dbReference type="RefSeq" id="WP_010871139.1">
    <property type="nucleotide sequence ID" value="NC_000909.1"/>
</dbReference>
<dbReference type="SMR" id="Q59009"/>
<dbReference type="FunCoup" id="Q59009">
    <property type="interactions" value="1"/>
</dbReference>
<dbReference type="STRING" id="243232.MJ_1614"/>
<dbReference type="PaxDb" id="243232-MJ_1614"/>
<dbReference type="EnsemblBacteria" id="AAB99634">
    <property type="protein sequence ID" value="AAB99634"/>
    <property type="gene ID" value="MJ_1614"/>
</dbReference>
<dbReference type="GeneID" id="1452523"/>
<dbReference type="KEGG" id="mja:MJ_1614"/>
<dbReference type="eggNOG" id="arCOG01895">
    <property type="taxonomic scope" value="Archaea"/>
</dbReference>
<dbReference type="HOGENOM" id="CLU_050006_7_2_2"/>
<dbReference type="InParanoid" id="Q59009"/>
<dbReference type="OrthoDB" id="372143at2157"/>
<dbReference type="PhylomeDB" id="Q59009"/>
<dbReference type="Proteomes" id="UP000000805">
    <property type="component" value="Chromosome"/>
</dbReference>
<dbReference type="Gene3D" id="3.20.20.150">
    <property type="entry name" value="Divalent-metal-dependent TIM barrel enzymes"/>
    <property type="match status" value="1"/>
</dbReference>
<dbReference type="InterPro" id="IPR050312">
    <property type="entry name" value="IolE/XylAMocC-like"/>
</dbReference>
<dbReference type="InterPro" id="IPR036237">
    <property type="entry name" value="Xyl_isomerase-like_sf"/>
</dbReference>
<dbReference type="InterPro" id="IPR013022">
    <property type="entry name" value="Xyl_isomerase-like_TIM-brl"/>
</dbReference>
<dbReference type="PANTHER" id="PTHR12110">
    <property type="entry name" value="HYDROXYPYRUVATE ISOMERASE"/>
    <property type="match status" value="1"/>
</dbReference>
<dbReference type="PANTHER" id="PTHR12110:SF21">
    <property type="entry name" value="XYLOSE ISOMERASE-LIKE TIM BARREL DOMAIN-CONTAINING PROTEIN"/>
    <property type="match status" value="1"/>
</dbReference>
<dbReference type="Pfam" id="PF01261">
    <property type="entry name" value="AP_endonuc_2"/>
    <property type="match status" value="1"/>
</dbReference>
<dbReference type="SUPFAM" id="SSF51658">
    <property type="entry name" value="Xylose isomerase-like"/>
    <property type="match status" value="1"/>
</dbReference>
<gene>
    <name type="ordered locus">MJ1614</name>
</gene>
<keyword id="KW-1185">Reference proteome</keyword>
<proteinExistence type="predicted"/>
<name>Y1614_METJA</name>
<organism>
    <name type="scientific">Methanocaldococcus jannaschii (strain ATCC 43067 / DSM 2661 / JAL-1 / JCM 10045 / NBRC 100440)</name>
    <name type="common">Methanococcus jannaschii</name>
    <dbReference type="NCBI Taxonomy" id="243232"/>
    <lineage>
        <taxon>Archaea</taxon>
        <taxon>Methanobacteriati</taxon>
        <taxon>Methanobacteriota</taxon>
        <taxon>Methanomada group</taxon>
        <taxon>Methanococci</taxon>
        <taxon>Methanococcales</taxon>
        <taxon>Methanocaldococcaceae</taxon>
        <taxon>Methanocaldococcus</taxon>
    </lineage>
</organism>
<accession>Q59009</accession>
<reference key="1">
    <citation type="journal article" date="1996" name="Science">
        <title>Complete genome sequence of the methanogenic archaeon, Methanococcus jannaschii.</title>
        <authorList>
            <person name="Bult C.J."/>
            <person name="White O."/>
            <person name="Olsen G.J."/>
            <person name="Zhou L."/>
            <person name="Fleischmann R.D."/>
            <person name="Sutton G.G."/>
            <person name="Blake J.A."/>
            <person name="FitzGerald L.M."/>
            <person name="Clayton R.A."/>
            <person name="Gocayne J.D."/>
            <person name="Kerlavage A.R."/>
            <person name="Dougherty B.A."/>
            <person name="Tomb J.-F."/>
            <person name="Adams M.D."/>
            <person name="Reich C.I."/>
            <person name="Overbeek R."/>
            <person name="Kirkness E.F."/>
            <person name="Weinstock K.G."/>
            <person name="Merrick J.M."/>
            <person name="Glodek A."/>
            <person name="Scott J.L."/>
            <person name="Geoghagen N.S.M."/>
            <person name="Weidman J.F."/>
            <person name="Fuhrmann J.L."/>
            <person name="Nguyen D."/>
            <person name="Utterback T.R."/>
            <person name="Kelley J.M."/>
            <person name="Peterson J.D."/>
            <person name="Sadow P.W."/>
            <person name="Hanna M.C."/>
            <person name="Cotton M.D."/>
            <person name="Roberts K.M."/>
            <person name="Hurst M.A."/>
            <person name="Kaine B.P."/>
            <person name="Borodovsky M."/>
            <person name="Klenk H.-P."/>
            <person name="Fraser C.M."/>
            <person name="Smith H.O."/>
            <person name="Woese C.R."/>
            <person name="Venter J.C."/>
        </authorList>
    </citation>
    <scope>NUCLEOTIDE SEQUENCE [LARGE SCALE GENOMIC DNA]</scope>
    <source>
        <strain>ATCC 43067 / DSM 2661 / JAL-1 / JCM 10045 / NBRC 100440</strain>
    </source>
</reference>
<sequence length="251" mass="28930">MKLGVSTSLFLDTDKNLSDALEILEERVKYVELGCDGNLNVMSDGNIELAQSYDLKYTLHCPITDLNLSSYRERIRKVSLDFVRDVLEVAIKVDAKLIVLHPGYCVFKYDYEKALNSLIKSLNDLNNIQEEFGVQITIENMPSYDMFMFRNPDKEIIENLGELKITLDIGHSFLNKNIENFLKISDKIAHIHIHDNNGEFDEHLCIGKGKINFNNFKKDLKKINAIKMIELQNKSIDDLDLCIDNLKEILR</sequence>
<protein>
    <recommendedName>
        <fullName>Uncharacterized protein MJ1614</fullName>
    </recommendedName>
</protein>